<gene>
    <name evidence="1" type="primary">atpA</name>
    <name type="synonym">uncA</name>
    <name type="ordered locus">Awo_c02210</name>
</gene>
<accession>P50000</accession>
<accession>H6LFT5</accession>
<keyword id="KW-0066">ATP synthesis</keyword>
<keyword id="KW-0067">ATP-binding</keyword>
<keyword id="KW-1003">Cell membrane</keyword>
<keyword id="KW-0139">CF(1)</keyword>
<keyword id="KW-0406">Ion transport</keyword>
<keyword id="KW-0472">Membrane</keyword>
<keyword id="KW-0547">Nucleotide-binding</keyword>
<keyword id="KW-1185">Reference proteome</keyword>
<keyword id="KW-0915">Sodium</keyword>
<keyword id="KW-0739">Sodium transport</keyword>
<keyword id="KW-1278">Translocase</keyword>
<keyword id="KW-0813">Transport</keyword>
<sequence>MNLRPEEISQIIKNEIERYEDKLEVVDVGTVIQVGDGVARVHGLENAMAGELLAFPNEVYGMVLNLEEDNVGCVLLGYDDDIVEGDIVRCTGRIVEVPVGEAMIGRVVNALGFPVDGKGPIVTDHRRPVEVKAAGVIERESVNQPIQTGYKAIDSMIPIGRGQRELIIGDRQTGKTALAIDTIINQKGEDVICIYVAIGQKDSTVAQIVGQLEENNAMDYTIIVSAGAAQLAPLQYIAPYSGVTMAEYFMNEQQKDVLIIYDDLSKHAVAYRAMSLILRRPPGREAYPGDVFYLHSRLLERAAKLKAGGSITALPIIETQAGDVSAYIPTNVISITDGQIFLEAELFRSGIRPAVNPGISVSRVGGSAQIKSMKKVAGPLRIEYAQYRELASFAQFGSDLDDETKAQLAKGERIVEILKQDQYDPMNVEDQVLILYAATNGFLLDIEVKDIREFEKGLIKFAQKKYPEIMTKVKGKDGLSDEVVAAFAECIEAYKKVFSKSV</sequence>
<organism>
    <name type="scientific">Acetobacterium woodii (strain ATCC 29683 / DSM 1030 / JCM 2381 / KCTC 1655 / WB1)</name>
    <dbReference type="NCBI Taxonomy" id="931626"/>
    <lineage>
        <taxon>Bacteria</taxon>
        <taxon>Bacillati</taxon>
        <taxon>Bacillota</taxon>
        <taxon>Clostridia</taxon>
        <taxon>Eubacteriales</taxon>
        <taxon>Eubacteriaceae</taxon>
        <taxon>Acetobacterium</taxon>
    </lineage>
</organism>
<dbReference type="EC" id="7.2.2.1"/>
<dbReference type="EMBL" id="U10505">
    <property type="protein sequence ID" value="AAA79906.2"/>
    <property type="molecule type" value="Genomic_DNA"/>
</dbReference>
<dbReference type="EMBL" id="CP002987">
    <property type="protein sequence ID" value="AFA47030.1"/>
    <property type="molecule type" value="Genomic_DNA"/>
</dbReference>
<dbReference type="PIR" id="I39746">
    <property type="entry name" value="I39746"/>
</dbReference>
<dbReference type="RefSeq" id="WP_014354633.1">
    <property type="nucleotide sequence ID" value="NC_016894.1"/>
</dbReference>
<dbReference type="SMR" id="P50000"/>
<dbReference type="STRING" id="931626.Awo_c02210"/>
<dbReference type="TCDB" id="3.A.2.1.5">
    <property type="family name" value="the h+- or na+-translocating f-type, v-type and a-type atpase (f-atpase) superfamily"/>
</dbReference>
<dbReference type="KEGG" id="awo:Awo_c02210"/>
<dbReference type="eggNOG" id="COG0056">
    <property type="taxonomic scope" value="Bacteria"/>
</dbReference>
<dbReference type="HOGENOM" id="CLU_010091_2_1_9"/>
<dbReference type="OrthoDB" id="9803053at2"/>
<dbReference type="Proteomes" id="UP000007177">
    <property type="component" value="Chromosome"/>
</dbReference>
<dbReference type="GO" id="GO:0005886">
    <property type="term" value="C:plasma membrane"/>
    <property type="evidence" value="ECO:0007669"/>
    <property type="project" value="UniProtKB-SubCell"/>
</dbReference>
<dbReference type="GO" id="GO:0045259">
    <property type="term" value="C:proton-transporting ATP synthase complex"/>
    <property type="evidence" value="ECO:0007669"/>
    <property type="project" value="UniProtKB-KW"/>
</dbReference>
<dbReference type="GO" id="GO:0043531">
    <property type="term" value="F:ADP binding"/>
    <property type="evidence" value="ECO:0007669"/>
    <property type="project" value="TreeGrafter"/>
</dbReference>
<dbReference type="GO" id="GO:0005524">
    <property type="term" value="F:ATP binding"/>
    <property type="evidence" value="ECO:0007669"/>
    <property type="project" value="UniProtKB-UniRule"/>
</dbReference>
<dbReference type="GO" id="GO:0046933">
    <property type="term" value="F:proton-transporting ATP synthase activity, rotational mechanism"/>
    <property type="evidence" value="ECO:0007669"/>
    <property type="project" value="UniProtKB-UniRule"/>
</dbReference>
<dbReference type="GO" id="GO:0046962">
    <property type="term" value="F:sodium-transporting ATPase activity, rotational mechanism"/>
    <property type="evidence" value="ECO:0007669"/>
    <property type="project" value="UniProtKB-EC"/>
</dbReference>
<dbReference type="CDD" id="cd18113">
    <property type="entry name" value="ATP-synt_F1_alpha_C"/>
    <property type="match status" value="1"/>
</dbReference>
<dbReference type="CDD" id="cd18116">
    <property type="entry name" value="ATP-synt_F1_alpha_N"/>
    <property type="match status" value="1"/>
</dbReference>
<dbReference type="CDD" id="cd01132">
    <property type="entry name" value="F1-ATPase_alpha_CD"/>
    <property type="match status" value="1"/>
</dbReference>
<dbReference type="FunFam" id="1.20.150.20:FF:000001">
    <property type="entry name" value="ATP synthase subunit alpha"/>
    <property type="match status" value="1"/>
</dbReference>
<dbReference type="FunFam" id="2.40.30.20:FF:000001">
    <property type="entry name" value="ATP synthase subunit alpha"/>
    <property type="match status" value="1"/>
</dbReference>
<dbReference type="FunFam" id="3.40.50.300:FF:000002">
    <property type="entry name" value="ATP synthase subunit alpha"/>
    <property type="match status" value="1"/>
</dbReference>
<dbReference type="Gene3D" id="2.40.30.20">
    <property type="match status" value="1"/>
</dbReference>
<dbReference type="Gene3D" id="1.20.150.20">
    <property type="entry name" value="ATP synthase alpha/beta chain, C-terminal domain"/>
    <property type="match status" value="1"/>
</dbReference>
<dbReference type="Gene3D" id="3.40.50.300">
    <property type="entry name" value="P-loop containing nucleotide triphosphate hydrolases"/>
    <property type="match status" value="1"/>
</dbReference>
<dbReference type="HAMAP" id="MF_01346">
    <property type="entry name" value="ATP_synth_alpha_bact"/>
    <property type="match status" value="1"/>
</dbReference>
<dbReference type="InterPro" id="IPR023366">
    <property type="entry name" value="ATP_synth_asu-like_sf"/>
</dbReference>
<dbReference type="InterPro" id="IPR000793">
    <property type="entry name" value="ATP_synth_asu_C"/>
</dbReference>
<dbReference type="InterPro" id="IPR038376">
    <property type="entry name" value="ATP_synth_asu_C_sf"/>
</dbReference>
<dbReference type="InterPro" id="IPR033732">
    <property type="entry name" value="ATP_synth_F1_a_nt-bd_dom"/>
</dbReference>
<dbReference type="InterPro" id="IPR005294">
    <property type="entry name" value="ATP_synth_F1_asu"/>
</dbReference>
<dbReference type="InterPro" id="IPR020003">
    <property type="entry name" value="ATPase_a/bsu_AS"/>
</dbReference>
<dbReference type="InterPro" id="IPR004100">
    <property type="entry name" value="ATPase_F1/V1/A1_a/bsu_N"/>
</dbReference>
<dbReference type="InterPro" id="IPR036121">
    <property type="entry name" value="ATPase_F1/V1/A1_a/bsu_N_sf"/>
</dbReference>
<dbReference type="InterPro" id="IPR000194">
    <property type="entry name" value="ATPase_F1/V1/A1_a/bsu_nucl-bd"/>
</dbReference>
<dbReference type="InterPro" id="IPR027417">
    <property type="entry name" value="P-loop_NTPase"/>
</dbReference>
<dbReference type="NCBIfam" id="TIGR00962">
    <property type="entry name" value="atpA"/>
    <property type="match status" value="1"/>
</dbReference>
<dbReference type="NCBIfam" id="NF009884">
    <property type="entry name" value="PRK13343.1"/>
    <property type="match status" value="1"/>
</dbReference>
<dbReference type="PANTHER" id="PTHR48082">
    <property type="entry name" value="ATP SYNTHASE SUBUNIT ALPHA, MITOCHONDRIAL"/>
    <property type="match status" value="1"/>
</dbReference>
<dbReference type="PANTHER" id="PTHR48082:SF2">
    <property type="entry name" value="ATP SYNTHASE SUBUNIT ALPHA, MITOCHONDRIAL"/>
    <property type="match status" value="1"/>
</dbReference>
<dbReference type="Pfam" id="PF00006">
    <property type="entry name" value="ATP-synt_ab"/>
    <property type="match status" value="1"/>
</dbReference>
<dbReference type="Pfam" id="PF00306">
    <property type="entry name" value="ATP-synt_ab_C"/>
    <property type="match status" value="1"/>
</dbReference>
<dbReference type="Pfam" id="PF02874">
    <property type="entry name" value="ATP-synt_ab_N"/>
    <property type="match status" value="1"/>
</dbReference>
<dbReference type="PIRSF" id="PIRSF039088">
    <property type="entry name" value="F_ATPase_subunit_alpha"/>
    <property type="match status" value="1"/>
</dbReference>
<dbReference type="SUPFAM" id="SSF47917">
    <property type="entry name" value="C-terminal domain of alpha and beta subunits of F1 ATP synthase"/>
    <property type="match status" value="1"/>
</dbReference>
<dbReference type="SUPFAM" id="SSF50615">
    <property type="entry name" value="N-terminal domain of alpha and beta subunits of F1 ATP synthase"/>
    <property type="match status" value="1"/>
</dbReference>
<dbReference type="SUPFAM" id="SSF52540">
    <property type="entry name" value="P-loop containing nucleoside triphosphate hydrolases"/>
    <property type="match status" value="1"/>
</dbReference>
<dbReference type="PROSITE" id="PS00152">
    <property type="entry name" value="ATPASE_ALPHA_BETA"/>
    <property type="match status" value="1"/>
</dbReference>
<name>ATPA_ACEWD</name>
<feature type="chain" id="PRO_0000144311" description="ATP synthase subunit alpha, sodium ion specific">
    <location>
        <begin position="1"/>
        <end position="502"/>
    </location>
</feature>
<feature type="binding site" evidence="1">
    <location>
        <begin position="169"/>
        <end position="176"/>
    </location>
    <ligand>
        <name>ATP</name>
        <dbReference type="ChEBI" id="CHEBI:30616"/>
    </ligand>
</feature>
<feature type="site" description="Required for activity" evidence="1">
    <location>
        <position position="360"/>
    </location>
</feature>
<feature type="sequence conflict" description="In Ref. 1; AAA79906." evidence="2" ref="1">
    <original>E</original>
    <variation>D</variation>
    <location>
        <position position="17"/>
    </location>
</feature>
<feature type="sequence conflict" description="In Ref. 1; AAA79906." evidence="2" ref="1">
    <original>VEVPVGEAMI</original>
    <variation>LKFQLANHVF</variation>
    <location>
        <begin position="95"/>
        <end position="104"/>
    </location>
</feature>
<feature type="sequence conflict" description="In Ref. 1; AAA79906." evidence="2" ref="1">
    <original>AI</original>
    <variation>GF</variation>
    <location>
        <begin position="179"/>
        <end position="180"/>
    </location>
</feature>
<feature type="sequence conflict" description="In Ref. 1; AAA79906." evidence="2" ref="1">
    <original>QY</original>
    <variation>HN</variation>
    <location>
        <begin position="235"/>
        <end position="236"/>
    </location>
</feature>
<feature type="sequence conflict" description="In Ref. 1; AAA79906." evidence="2" ref="1">
    <original>NEQQKDVLIIYDDL</original>
    <variation>KGPTKRITVHQGRP</variation>
    <location>
        <begin position="251"/>
        <end position="264"/>
    </location>
</feature>
<feature type="sequence conflict" description="In Ref. 1; AAA79906." evidence="2" ref="1">
    <original>AVAYRAMSLIL</original>
    <variation>GCLPSLVFDP</variation>
    <location>
        <begin position="268"/>
        <end position="278"/>
    </location>
</feature>
<feature type="sequence conflict" description="In Ref. 1; AAA79906." evidence="2" ref="1">
    <original>A</original>
    <variation>P</variation>
    <location>
        <position position="286"/>
    </location>
</feature>
<feature type="sequence conflict" description="In Ref. 1; AAA79906." evidence="2" ref="1">
    <original>D</original>
    <variation>G</variation>
    <location>
        <position position="337"/>
    </location>
</feature>
<reference key="1">
    <citation type="journal article" date="1999" name="J. Biol. Chem.">
        <title>The Na+-F1FO-ATPase operon from Acetobacterium woodii: operon structure and presence of multiple copies of atpE which encode proteolipids of 8- and 18-kDa.</title>
        <authorList>
            <person name="Rahlfs S."/>
            <person name="Aufurth S."/>
            <person name="Mueller V."/>
        </authorList>
    </citation>
    <scope>NUCLEOTIDE SEQUENCE [GENOMIC DNA]</scope>
    <source>
        <strain>ATCC 29683 / DSM 1030 / JCM 2381 / KCTC 1655 / WB1</strain>
    </source>
</reference>
<reference key="2">
    <citation type="submission" date="2011-07" db="EMBL/GenBank/DDBJ databases">
        <title>Complete genome sequence of Acetobacterium woodii.</title>
        <authorList>
            <person name="Poehlein A."/>
            <person name="Schmidt S."/>
            <person name="Kaster A.-K."/>
            <person name="Goenrich M."/>
            <person name="Vollmers J."/>
            <person name="Thuermer A."/>
            <person name="Gottschalk G."/>
            <person name="Thauer R.K."/>
            <person name="Daniel R."/>
            <person name="Mueller V."/>
        </authorList>
    </citation>
    <scope>NUCLEOTIDE SEQUENCE [LARGE SCALE GENOMIC DNA]</scope>
    <source>
        <strain>ATCC 29683 / DSM 1030 / JCM 2381 / KCTC 1655 / WB1</strain>
    </source>
</reference>
<reference key="3">
    <citation type="journal article" date="1995" name="Biochim. Biophys. Acta">
        <title>The Na(+)-translocating ATPase of Acetobacterium woodii is a F1F0-type enzyme as deduced from the primary structure of its beta, gamma and epsilon subunits.</title>
        <authorList>
            <person name="Forster A."/>
            <person name="Daniel R."/>
            <person name="Mueller V."/>
        </authorList>
    </citation>
    <scope>NUCLEOTIDE SEQUENCE [GENOMIC DNA] OF 452-501</scope>
    <source>
        <strain>ATCC 29683 / DSM 1030 / JCM 2381 / KCTC 1655 / WB1</strain>
    </source>
</reference>
<proteinExistence type="inferred from homology"/>
<evidence type="ECO:0000255" key="1">
    <source>
        <dbReference type="HAMAP-Rule" id="MF_01346"/>
    </source>
</evidence>
<evidence type="ECO:0000305" key="2"/>
<protein>
    <recommendedName>
        <fullName>ATP synthase subunit alpha, sodium ion specific</fullName>
        <ecNumber>7.2.2.1</ecNumber>
    </recommendedName>
    <alternativeName>
        <fullName>Na(+)-translocating ATPase subunit alpha</fullName>
    </alternativeName>
</protein>
<comment type="function">
    <text>Produces ATP from ADP in the presence of a sodium ion gradient across the membrane. The alpha chain is a regulatory subunit.</text>
</comment>
<comment type="catalytic activity">
    <reaction>
        <text>4 Na(+)(in) + ATP + H2O = 4 Na(+)(out) + ADP + phosphate + H(+)</text>
        <dbReference type="Rhea" id="RHEA:58156"/>
        <dbReference type="ChEBI" id="CHEBI:15377"/>
        <dbReference type="ChEBI" id="CHEBI:15378"/>
        <dbReference type="ChEBI" id="CHEBI:29101"/>
        <dbReference type="ChEBI" id="CHEBI:30616"/>
        <dbReference type="ChEBI" id="CHEBI:43474"/>
        <dbReference type="ChEBI" id="CHEBI:456216"/>
        <dbReference type="EC" id="7.2.2.1"/>
    </reaction>
</comment>
<comment type="activity regulation">
    <text>Inhibited by nitrate.</text>
</comment>
<comment type="subunit">
    <text>F-type ATPases have 2 components, CF(1) - the catalytic core - and CF(0) - the membrane proton channel. CF(1) has five subunits: alpha(3), beta(3), gamma(1), delta(1), epsilon(1). CF(0) has three main subunits: a, b and c.</text>
</comment>
<comment type="subcellular location">
    <subcellularLocation>
        <location evidence="1">Cell membrane</location>
        <topology evidence="1">Peripheral membrane protein</topology>
    </subcellularLocation>
</comment>
<comment type="similarity">
    <text evidence="1">Belongs to the ATPase alpha/beta chains family.</text>
</comment>